<evidence type="ECO:0000255" key="1">
    <source>
        <dbReference type="HAMAP-Rule" id="MF_00251"/>
    </source>
</evidence>
<evidence type="ECO:0000305" key="2"/>
<protein>
    <recommendedName>
        <fullName evidence="1">Large ribosomal subunit protein bL36</fullName>
    </recommendedName>
    <alternativeName>
        <fullName evidence="2">50S ribosomal protein L36</fullName>
    </alternativeName>
</protein>
<feature type="chain" id="PRO_1000101046" description="Large ribosomal subunit protein bL36">
    <location>
        <begin position="1"/>
        <end position="37"/>
    </location>
</feature>
<comment type="similarity">
    <text evidence="1">Belongs to the bacterial ribosomal protein bL36 family.</text>
</comment>
<dbReference type="EMBL" id="CP001047">
    <property type="protein sequence ID" value="ACF07276.1"/>
    <property type="molecule type" value="Genomic_DNA"/>
</dbReference>
<dbReference type="RefSeq" id="WP_012498233.1">
    <property type="nucleotide sequence ID" value="NC_011025.1"/>
</dbReference>
<dbReference type="SMR" id="B3PMM4"/>
<dbReference type="STRING" id="243272.MARTH_orf415"/>
<dbReference type="KEGG" id="mat:MARTH_orf415"/>
<dbReference type="eggNOG" id="COG0257">
    <property type="taxonomic scope" value="Bacteria"/>
</dbReference>
<dbReference type="HOGENOM" id="CLU_135723_6_2_14"/>
<dbReference type="Proteomes" id="UP000008812">
    <property type="component" value="Chromosome"/>
</dbReference>
<dbReference type="GO" id="GO:0005737">
    <property type="term" value="C:cytoplasm"/>
    <property type="evidence" value="ECO:0007669"/>
    <property type="project" value="UniProtKB-ARBA"/>
</dbReference>
<dbReference type="GO" id="GO:1990904">
    <property type="term" value="C:ribonucleoprotein complex"/>
    <property type="evidence" value="ECO:0007669"/>
    <property type="project" value="UniProtKB-KW"/>
</dbReference>
<dbReference type="GO" id="GO:0005840">
    <property type="term" value="C:ribosome"/>
    <property type="evidence" value="ECO:0007669"/>
    <property type="project" value="UniProtKB-KW"/>
</dbReference>
<dbReference type="GO" id="GO:0003735">
    <property type="term" value="F:structural constituent of ribosome"/>
    <property type="evidence" value="ECO:0007669"/>
    <property type="project" value="InterPro"/>
</dbReference>
<dbReference type="GO" id="GO:0006412">
    <property type="term" value="P:translation"/>
    <property type="evidence" value="ECO:0007669"/>
    <property type="project" value="UniProtKB-UniRule"/>
</dbReference>
<dbReference type="HAMAP" id="MF_00251">
    <property type="entry name" value="Ribosomal_bL36"/>
    <property type="match status" value="1"/>
</dbReference>
<dbReference type="InterPro" id="IPR000473">
    <property type="entry name" value="Ribosomal_bL36"/>
</dbReference>
<dbReference type="InterPro" id="IPR035977">
    <property type="entry name" value="Ribosomal_bL36_sp"/>
</dbReference>
<dbReference type="NCBIfam" id="TIGR01022">
    <property type="entry name" value="rpmJ_bact"/>
    <property type="match status" value="1"/>
</dbReference>
<dbReference type="PANTHER" id="PTHR42888">
    <property type="entry name" value="50S RIBOSOMAL PROTEIN L36, CHLOROPLASTIC"/>
    <property type="match status" value="1"/>
</dbReference>
<dbReference type="PANTHER" id="PTHR42888:SF1">
    <property type="entry name" value="LARGE RIBOSOMAL SUBUNIT PROTEIN BL36C"/>
    <property type="match status" value="1"/>
</dbReference>
<dbReference type="Pfam" id="PF00444">
    <property type="entry name" value="Ribosomal_L36"/>
    <property type="match status" value="1"/>
</dbReference>
<dbReference type="SUPFAM" id="SSF57840">
    <property type="entry name" value="Ribosomal protein L36"/>
    <property type="match status" value="1"/>
</dbReference>
<dbReference type="PROSITE" id="PS00828">
    <property type="entry name" value="RIBOSOMAL_L36"/>
    <property type="match status" value="1"/>
</dbReference>
<reference key="1">
    <citation type="journal article" date="2008" name="Infect. Immun.">
        <title>Genome of Mycoplasma arthritidis.</title>
        <authorList>
            <person name="Dybvig K."/>
            <person name="Zuhua C."/>
            <person name="Lao P."/>
            <person name="Jordan D.S."/>
            <person name="French C.T."/>
            <person name="Tu A.H."/>
            <person name="Loraine A.E."/>
        </authorList>
    </citation>
    <scope>NUCLEOTIDE SEQUENCE [LARGE SCALE GENOMIC DNA]</scope>
    <source>
        <strain>158L3-1</strain>
    </source>
</reference>
<gene>
    <name evidence="1" type="primary">rpmJ</name>
    <name type="ordered locus">MARTH_orf415</name>
</gene>
<sequence>MKVRASIKRICRECKLIKRHGVNRIICVNPKHKQRQG</sequence>
<proteinExistence type="inferred from homology"/>
<organism>
    <name type="scientific">Metamycoplasma arthritidis (strain 158L3-1)</name>
    <name type="common">Mycoplasma arthritidis</name>
    <dbReference type="NCBI Taxonomy" id="243272"/>
    <lineage>
        <taxon>Bacteria</taxon>
        <taxon>Bacillati</taxon>
        <taxon>Mycoplasmatota</taxon>
        <taxon>Mycoplasmoidales</taxon>
        <taxon>Metamycoplasmataceae</taxon>
        <taxon>Metamycoplasma</taxon>
    </lineage>
</organism>
<accession>B3PMM4</accession>
<keyword id="KW-1185">Reference proteome</keyword>
<keyword id="KW-0687">Ribonucleoprotein</keyword>
<keyword id="KW-0689">Ribosomal protein</keyword>
<name>RL36_META1</name>